<dbReference type="EC" id="1.1.1.94" evidence="1"/>
<dbReference type="EMBL" id="AP009044">
    <property type="protein sequence ID" value="BAF54380.1"/>
    <property type="molecule type" value="Genomic_DNA"/>
</dbReference>
<dbReference type="RefSeq" id="WP_003858849.1">
    <property type="nucleotide sequence ID" value="NC_009342.1"/>
</dbReference>
<dbReference type="SMR" id="A4QDT3"/>
<dbReference type="GeneID" id="1019296"/>
<dbReference type="KEGG" id="cgt:cgR_1394"/>
<dbReference type="HOGENOM" id="CLU_033449_0_2_11"/>
<dbReference type="PhylomeDB" id="A4QDT3"/>
<dbReference type="UniPathway" id="UPA00940"/>
<dbReference type="Proteomes" id="UP000006698">
    <property type="component" value="Chromosome"/>
</dbReference>
<dbReference type="GO" id="GO:0005829">
    <property type="term" value="C:cytosol"/>
    <property type="evidence" value="ECO:0007669"/>
    <property type="project" value="TreeGrafter"/>
</dbReference>
<dbReference type="GO" id="GO:0047952">
    <property type="term" value="F:glycerol-3-phosphate dehydrogenase [NAD(P)+] activity"/>
    <property type="evidence" value="ECO:0007669"/>
    <property type="project" value="UniProtKB-UniRule"/>
</dbReference>
<dbReference type="GO" id="GO:0051287">
    <property type="term" value="F:NAD binding"/>
    <property type="evidence" value="ECO:0007669"/>
    <property type="project" value="InterPro"/>
</dbReference>
<dbReference type="GO" id="GO:0005975">
    <property type="term" value="P:carbohydrate metabolic process"/>
    <property type="evidence" value="ECO:0007669"/>
    <property type="project" value="InterPro"/>
</dbReference>
<dbReference type="GO" id="GO:0046167">
    <property type="term" value="P:glycerol-3-phosphate biosynthetic process"/>
    <property type="evidence" value="ECO:0007669"/>
    <property type="project" value="UniProtKB-UniRule"/>
</dbReference>
<dbReference type="GO" id="GO:0046168">
    <property type="term" value="P:glycerol-3-phosphate catabolic process"/>
    <property type="evidence" value="ECO:0007669"/>
    <property type="project" value="InterPro"/>
</dbReference>
<dbReference type="GO" id="GO:0006650">
    <property type="term" value="P:glycerophospholipid metabolic process"/>
    <property type="evidence" value="ECO:0007669"/>
    <property type="project" value="UniProtKB-UniRule"/>
</dbReference>
<dbReference type="GO" id="GO:0008654">
    <property type="term" value="P:phospholipid biosynthetic process"/>
    <property type="evidence" value="ECO:0007669"/>
    <property type="project" value="UniProtKB-KW"/>
</dbReference>
<dbReference type="FunFam" id="1.10.1040.10:FF:000001">
    <property type="entry name" value="Glycerol-3-phosphate dehydrogenase [NAD(P)+]"/>
    <property type="match status" value="1"/>
</dbReference>
<dbReference type="FunFam" id="3.40.50.720:FF:000019">
    <property type="entry name" value="Glycerol-3-phosphate dehydrogenase [NAD(P)+]"/>
    <property type="match status" value="1"/>
</dbReference>
<dbReference type="Gene3D" id="1.10.1040.10">
    <property type="entry name" value="N-(1-d-carboxylethyl)-l-norvaline Dehydrogenase, domain 2"/>
    <property type="match status" value="1"/>
</dbReference>
<dbReference type="Gene3D" id="3.40.50.720">
    <property type="entry name" value="NAD(P)-binding Rossmann-like Domain"/>
    <property type="match status" value="1"/>
</dbReference>
<dbReference type="HAMAP" id="MF_00394">
    <property type="entry name" value="NAD_Glyc3P_dehydrog"/>
    <property type="match status" value="1"/>
</dbReference>
<dbReference type="InterPro" id="IPR008927">
    <property type="entry name" value="6-PGluconate_DH-like_C_sf"/>
</dbReference>
<dbReference type="InterPro" id="IPR013328">
    <property type="entry name" value="6PGD_dom2"/>
</dbReference>
<dbReference type="InterPro" id="IPR006168">
    <property type="entry name" value="G3P_DH_NAD-dep"/>
</dbReference>
<dbReference type="InterPro" id="IPR006109">
    <property type="entry name" value="G3P_DH_NAD-dep_C"/>
</dbReference>
<dbReference type="InterPro" id="IPR011128">
    <property type="entry name" value="G3P_DH_NAD-dep_N"/>
</dbReference>
<dbReference type="InterPro" id="IPR036291">
    <property type="entry name" value="NAD(P)-bd_dom_sf"/>
</dbReference>
<dbReference type="NCBIfam" id="NF000940">
    <property type="entry name" value="PRK00094.1-2"/>
    <property type="match status" value="1"/>
</dbReference>
<dbReference type="NCBIfam" id="NF000942">
    <property type="entry name" value="PRK00094.1-4"/>
    <property type="match status" value="1"/>
</dbReference>
<dbReference type="PANTHER" id="PTHR11728">
    <property type="entry name" value="GLYCEROL-3-PHOSPHATE DEHYDROGENASE"/>
    <property type="match status" value="1"/>
</dbReference>
<dbReference type="PANTHER" id="PTHR11728:SF1">
    <property type="entry name" value="GLYCEROL-3-PHOSPHATE DEHYDROGENASE [NAD(+)] 2, CHLOROPLASTIC"/>
    <property type="match status" value="1"/>
</dbReference>
<dbReference type="Pfam" id="PF07479">
    <property type="entry name" value="NAD_Gly3P_dh_C"/>
    <property type="match status" value="1"/>
</dbReference>
<dbReference type="Pfam" id="PF01210">
    <property type="entry name" value="NAD_Gly3P_dh_N"/>
    <property type="match status" value="1"/>
</dbReference>
<dbReference type="PIRSF" id="PIRSF000114">
    <property type="entry name" value="Glycerol-3-P_dh"/>
    <property type="match status" value="1"/>
</dbReference>
<dbReference type="PRINTS" id="PR00077">
    <property type="entry name" value="GPDHDRGNASE"/>
</dbReference>
<dbReference type="SUPFAM" id="SSF48179">
    <property type="entry name" value="6-phosphogluconate dehydrogenase C-terminal domain-like"/>
    <property type="match status" value="1"/>
</dbReference>
<dbReference type="SUPFAM" id="SSF51735">
    <property type="entry name" value="NAD(P)-binding Rossmann-fold domains"/>
    <property type="match status" value="1"/>
</dbReference>
<dbReference type="PROSITE" id="PS00957">
    <property type="entry name" value="NAD_G3PDH"/>
    <property type="match status" value="1"/>
</dbReference>
<proteinExistence type="inferred from homology"/>
<reference key="1">
    <citation type="journal article" date="2007" name="Microbiology">
        <title>Comparative analysis of the Corynebacterium glutamicum group and complete genome sequence of strain R.</title>
        <authorList>
            <person name="Yukawa H."/>
            <person name="Omumasaba C.A."/>
            <person name="Nonaka H."/>
            <person name="Kos P."/>
            <person name="Okai N."/>
            <person name="Suzuki N."/>
            <person name="Suda M."/>
            <person name="Tsuge Y."/>
            <person name="Watanabe J."/>
            <person name="Ikeda Y."/>
            <person name="Vertes A.A."/>
            <person name="Inui M."/>
        </authorList>
    </citation>
    <scope>NUCLEOTIDE SEQUENCE [LARGE SCALE GENOMIC DNA]</scope>
    <source>
        <strain>R</strain>
    </source>
</reference>
<name>GPDA_CORGB</name>
<organism>
    <name type="scientific">Corynebacterium glutamicum (strain R)</name>
    <dbReference type="NCBI Taxonomy" id="340322"/>
    <lineage>
        <taxon>Bacteria</taxon>
        <taxon>Bacillati</taxon>
        <taxon>Actinomycetota</taxon>
        <taxon>Actinomycetes</taxon>
        <taxon>Mycobacteriales</taxon>
        <taxon>Corynebacteriaceae</taxon>
        <taxon>Corynebacterium</taxon>
    </lineage>
</organism>
<accession>A4QDT3</accession>
<protein>
    <recommendedName>
        <fullName evidence="1">Glycerol-3-phosphate dehydrogenase [NAD(P)+]</fullName>
        <ecNumber evidence="1">1.1.1.94</ecNumber>
    </recommendedName>
    <alternativeName>
        <fullName evidence="1">NAD(P)(+)-dependent glycerol-3-phosphate dehydrogenase</fullName>
    </alternativeName>
    <alternativeName>
        <fullName evidence="1">NAD(P)H-dependent dihydroxyacetone-phosphate reductase</fullName>
    </alternativeName>
</protein>
<sequence length="332" mass="34682">MVSVSVMGAGSWGTTLAKVFSDAGNAVTLWARREELASTIRDSHENRDYLPGITLPESLQVTSSATEALEGAAIVVLAIPSQALRGNLAEWKETIPQDATLVSLAKGIEKGTHLRMSEVIAEVTEADPSRIAVLSGPNLAREIAEGQPAATVIACPDENRAKLVQAAVAAPYFRPYTNTDVVGTEIGGACKNVIALACGISHGYGLGENTNASLITRGLAEIARLGATLGADAKTFSGLAGMGDLVATCSSPLSRNRSFGERLGQGESLEKAREATNGQVAEGVISSQSIFDLATKLGVEMPITQAVYGVCHRDMKVTDMIVALMGRSKKAE</sequence>
<keyword id="KW-0963">Cytoplasm</keyword>
<keyword id="KW-0444">Lipid biosynthesis</keyword>
<keyword id="KW-0443">Lipid metabolism</keyword>
<keyword id="KW-0520">NAD</keyword>
<keyword id="KW-0521">NADP</keyword>
<keyword id="KW-0547">Nucleotide-binding</keyword>
<keyword id="KW-0560">Oxidoreductase</keyword>
<keyword id="KW-0594">Phospholipid biosynthesis</keyword>
<keyword id="KW-1208">Phospholipid metabolism</keyword>
<feature type="chain" id="PRO_1000049499" description="Glycerol-3-phosphate dehydrogenase [NAD(P)+]">
    <location>
        <begin position="1"/>
        <end position="332"/>
    </location>
</feature>
<feature type="active site" description="Proton acceptor" evidence="1">
    <location>
        <position position="191"/>
    </location>
</feature>
<feature type="binding site" evidence="1">
    <location>
        <position position="11"/>
    </location>
    <ligand>
        <name>NADPH</name>
        <dbReference type="ChEBI" id="CHEBI:57783"/>
    </ligand>
</feature>
<feature type="binding site" evidence="1">
    <location>
        <position position="12"/>
    </location>
    <ligand>
        <name>NADPH</name>
        <dbReference type="ChEBI" id="CHEBI:57783"/>
    </ligand>
</feature>
<feature type="binding site" evidence="1">
    <location>
        <position position="32"/>
    </location>
    <ligand>
        <name>NADPH</name>
        <dbReference type="ChEBI" id="CHEBI:57783"/>
    </ligand>
</feature>
<feature type="binding site" evidence="1">
    <location>
        <position position="33"/>
    </location>
    <ligand>
        <name>NADPH</name>
        <dbReference type="ChEBI" id="CHEBI:57783"/>
    </ligand>
</feature>
<feature type="binding site" evidence="1">
    <location>
        <position position="106"/>
    </location>
    <ligand>
        <name>NADPH</name>
        <dbReference type="ChEBI" id="CHEBI:57783"/>
    </ligand>
</feature>
<feature type="binding site" evidence="1">
    <location>
        <position position="106"/>
    </location>
    <ligand>
        <name>sn-glycerol 3-phosphate</name>
        <dbReference type="ChEBI" id="CHEBI:57597"/>
    </ligand>
</feature>
<feature type="binding site" evidence="1">
    <location>
        <position position="136"/>
    </location>
    <ligand>
        <name>sn-glycerol 3-phosphate</name>
        <dbReference type="ChEBI" id="CHEBI:57597"/>
    </ligand>
</feature>
<feature type="binding site" evidence="1">
    <location>
        <position position="140"/>
    </location>
    <ligand>
        <name>NADPH</name>
        <dbReference type="ChEBI" id="CHEBI:57783"/>
    </ligand>
</feature>
<feature type="binding site" evidence="1">
    <location>
        <position position="191"/>
    </location>
    <ligand>
        <name>sn-glycerol 3-phosphate</name>
        <dbReference type="ChEBI" id="CHEBI:57597"/>
    </ligand>
</feature>
<feature type="binding site" evidence="1">
    <location>
        <position position="244"/>
    </location>
    <ligand>
        <name>sn-glycerol 3-phosphate</name>
        <dbReference type="ChEBI" id="CHEBI:57597"/>
    </ligand>
</feature>
<feature type="binding site" evidence="1">
    <location>
        <position position="254"/>
    </location>
    <ligand>
        <name>sn-glycerol 3-phosphate</name>
        <dbReference type="ChEBI" id="CHEBI:57597"/>
    </ligand>
</feature>
<feature type="binding site" evidence="1">
    <location>
        <position position="255"/>
    </location>
    <ligand>
        <name>NADPH</name>
        <dbReference type="ChEBI" id="CHEBI:57783"/>
    </ligand>
</feature>
<feature type="binding site" evidence="1">
    <location>
        <position position="255"/>
    </location>
    <ligand>
        <name>sn-glycerol 3-phosphate</name>
        <dbReference type="ChEBI" id="CHEBI:57597"/>
    </ligand>
</feature>
<feature type="binding site" evidence="1">
    <location>
        <position position="256"/>
    </location>
    <ligand>
        <name>sn-glycerol 3-phosphate</name>
        <dbReference type="ChEBI" id="CHEBI:57597"/>
    </ligand>
</feature>
<feature type="binding site" evidence="1">
    <location>
        <position position="280"/>
    </location>
    <ligand>
        <name>NADPH</name>
        <dbReference type="ChEBI" id="CHEBI:57783"/>
    </ligand>
</feature>
<feature type="binding site" evidence="1">
    <location>
        <position position="282"/>
    </location>
    <ligand>
        <name>NADPH</name>
        <dbReference type="ChEBI" id="CHEBI:57783"/>
    </ligand>
</feature>
<comment type="function">
    <text evidence="1">Catalyzes the reduction of the glycolytic intermediate dihydroxyacetone phosphate (DHAP) to sn-glycerol 3-phosphate (G3P), the key precursor for phospholipid synthesis.</text>
</comment>
<comment type="catalytic activity">
    <reaction evidence="1">
        <text>sn-glycerol 3-phosphate + NAD(+) = dihydroxyacetone phosphate + NADH + H(+)</text>
        <dbReference type="Rhea" id="RHEA:11092"/>
        <dbReference type="ChEBI" id="CHEBI:15378"/>
        <dbReference type="ChEBI" id="CHEBI:57540"/>
        <dbReference type="ChEBI" id="CHEBI:57597"/>
        <dbReference type="ChEBI" id="CHEBI:57642"/>
        <dbReference type="ChEBI" id="CHEBI:57945"/>
        <dbReference type="EC" id="1.1.1.94"/>
    </reaction>
    <physiologicalReaction direction="right-to-left" evidence="1">
        <dbReference type="Rhea" id="RHEA:11094"/>
    </physiologicalReaction>
</comment>
<comment type="catalytic activity">
    <reaction evidence="1">
        <text>sn-glycerol 3-phosphate + NADP(+) = dihydroxyacetone phosphate + NADPH + H(+)</text>
        <dbReference type="Rhea" id="RHEA:11096"/>
        <dbReference type="ChEBI" id="CHEBI:15378"/>
        <dbReference type="ChEBI" id="CHEBI:57597"/>
        <dbReference type="ChEBI" id="CHEBI:57642"/>
        <dbReference type="ChEBI" id="CHEBI:57783"/>
        <dbReference type="ChEBI" id="CHEBI:58349"/>
        <dbReference type="EC" id="1.1.1.94"/>
    </reaction>
    <physiologicalReaction direction="right-to-left" evidence="1">
        <dbReference type="Rhea" id="RHEA:11098"/>
    </physiologicalReaction>
</comment>
<comment type="pathway">
    <text evidence="1">Membrane lipid metabolism; glycerophospholipid metabolism.</text>
</comment>
<comment type="subcellular location">
    <subcellularLocation>
        <location evidence="1">Cytoplasm</location>
    </subcellularLocation>
</comment>
<comment type="similarity">
    <text evidence="1">Belongs to the NAD-dependent glycerol-3-phosphate dehydrogenase family.</text>
</comment>
<gene>
    <name evidence="1" type="primary">gpsA</name>
    <name type="ordered locus">cgR_1394</name>
</gene>
<evidence type="ECO:0000255" key="1">
    <source>
        <dbReference type="HAMAP-Rule" id="MF_00394"/>
    </source>
</evidence>